<comment type="function">
    <text evidence="1">Binds the lower part of the 30S subunit head. Binds mRNA in the 70S ribosome, positioning it for translation.</text>
</comment>
<comment type="subunit">
    <text evidence="1">Part of the 30S ribosomal subunit. Forms a tight complex with proteins S10 and S14.</text>
</comment>
<comment type="similarity">
    <text evidence="1">Belongs to the universal ribosomal protein uS3 family.</text>
</comment>
<organism>
    <name type="scientific">Cereibacter sphaeroides (strain ATCC 17029 / ATH 2.4.9)</name>
    <name type="common">Rhodobacter sphaeroides</name>
    <dbReference type="NCBI Taxonomy" id="349101"/>
    <lineage>
        <taxon>Bacteria</taxon>
        <taxon>Pseudomonadati</taxon>
        <taxon>Pseudomonadota</taxon>
        <taxon>Alphaproteobacteria</taxon>
        <taxon>Rhodobacterales</taxon>
        <taxon>Paracoccaceae</taxon>
        <taxon>Cereibacter</taxon>
    </lineage>
</organism>
<keyword id="KW-0687">Ribonucleoprotein</keyword>
<keyword id="KW-0689">Ribosomal protein</keyword>
<keyword id="KW-0694">RNA-binding</keyword>
<keyword id="KW-0699">rRNA-binding</keyword>
<evidence type="ECO:0000255" key="1">
    <source>
        <dbReference type="HAMAP-Rule" id="MF_01309"/>
    </source>
</evidence>
<evidence type="ECO:0000256" key="2">
    <source>
        <dbReference type="SAM" id="MobiDB-lite"/>
    </source>
</evidence>
<evidence type="ECO:0000305" key="3"/>
<gene>
    <name evidence="1" type="primary">rpsC</name>
    <name type="ordered locus">Rsph17029_0367</name>
</gene>
<name>RS3_CERS1</name>
<accession>A3PGL7</accession>
<reference key="1">
    <citation type="submission" date="2007-02" db="EMBL/GenBank/DDBJ databases">
        <title>Complete sequence of chromosome 1 of Rhodobacter sphaeroides ATCC 17029.</title>
        <authorList>
            <person name="Copeland A."/>
            <person name="Lucas S."/>
            <person name="Lapidus A."/>
            <person name="Barry K."/>
            <person name="Detter J.C."/>
            <person name="Glavina del Rio T."/>
            <person name="Hammon N."/>
            <person name="Israni S."/>
            <person name="Dalin E."/>
            <person name="Tice H."/>
            <person name="Pitluck S."/>
            <person name="Kiss H."/>
            <person name="Brettin T."/>
            <person name="Bruce D."/>
            <person name="Han C."/>
            <person name="Tapia R."/>
            <person name="Gilna P."/>
            <person name="Schmutz J."/>
            <person name="Larimer F."/>
            <person name="Land M."/>
            <person name="Hauser L."/>
            <person name="Kyrpides N."/>
            <person name="Mikhailova N."/>
            <person name="Richardson P."/>
            <person name="Mackenzie C."/>
            <person name="Choudhary M."/>
            <person name="Donohue T.J."/>
            <person name="Kaplan S."/>
        </authorList>
    </citation>
    <scope>NUCLEOTIDE SEQUENCE [LARGE SCALE GENOMIC DNA]</scope>
    <source>
        <strain>ATCC 17029 / ATH 2.4.9</strain>
    </source>
</reference>
<protein>
    <recommendedName>
        <fullName evidence="1">Small ribosomal subunit protein uS3</fullName>
    </recommendedName>
    <alternativeName>
        <fullName evidence="3">30S ribosomal protein S3</fullName>
    </alternativeName>
</protein>
<sequence>MGQKVNPIGMRLQVNRTWDSRWFAESKDYGNLLLEDLKMREFIHDYAKQAGVSKVIIERPHRKCRVTIHTARPGVIIGKKGADIETLRKKLSAFTKSELHLNIVEIRKPELDAQLVAESIAQQMERRVSFRRAMKRGVQNAMRIGALGIRVNVSGRLGGAEIARTEWYREGRVPLHTLRADIDYATSEATTPYGIIGVKVWIFKGEILEHDPQAHDRRHSEAQEGAAPRPPRRDRERA</sequence>
<dbReference type="EMBL" id="CP000577">
    <property type="protein sequence ID" value="ABN75483.1"/>
    <property type="molecule type" value="Genomic_DNA"/>
</dbReference>
<dbReference type="RefSeq" id="WP_002722498.1">
    <property type="nucleotide sequence ID" value="NC_009049.1"/>
</dbReference>
<dbReference type="SMR" id="A3PGL7"/>
<dbReference type="GeneID" id="67445506"/>
<dbReference type="KEGG" id="rsh:Rsph17029_0367"/>
<dbReference type="HOGENOM" id="CLU_058591_0_2_5"/>
<dbReference type="GO" id="GO:0022627">
    <property type="term" value="C:cytosolic small ribosomal subunit"/>
    <property type="evidence" value="ECO:0007669"/>
    <property type="project" value="TreeGrafter"/>
</dbReference>
<dbReference type="GO" id="GO:0003729">
    <property type="term" value="F:mRNA binding"/>
    <property type="evidence" value="ECO:0007669"/>
    <property type="project" value="UniProtKB-UniRule"/>
</dbReference>
<dbReference type="GO" id="GO:0019843">
    <property type="term" value="F:rRNA binding"/>
    <property type="evidence" value="ECO:0007669"/>
    <property type="project" value="UniProtKB-UniRule"/>
</dbReference>
<dbReference type="GO" id="GO:0003735">
    <property type="term" value="F:structural constituent of ribosome"/>
    <property type="evidence" value="ECO:0007669"/>
    <property type="project" value="InterPro"/>
</dbReference>
<dbReference type="GO" id="GO:0006412">
    <property type="term" value="P:translation"/>
    <property type="evidence" value="ECO:0007669"/>
    <property type="project" value="UniProtKB-UniRule"/>
</dbReference>
<dbReference type="CDD" id="cd02412">
    <property type="entry name" value="KH-II_30S_S3"/>
    <property type="match status" value="1"/>
</dbReference>
<dbReference type="FunFam" id="3.30.1140.32:FF:000001">
    <property type="entry name" value="30S ribosomal protein S3"/>
    <property type="match status" value="1"/>
</dbReference>
<dbReference type="FunFam" id="3.30.300.20:FF:000001">
    <property type="entry name" value="30S ribosomal protein S3"/>
    <property type="match status" value="1"/>
</dbReference>
<dbReference type="Gene3D" id="3.30.300.20">
    <property type="match status" value="1"/>
</dbReference>
<dbReference type="Gene3D" id="3.30.1140.32">
    <property type="entry name" value="Ribosomal protein S3, C-terminal domain"/>
    <property type="match status" value="1"/>
</dbReference>
<dbReference type="HAMAP" id="MF_01309_B">
    <property type="entry name" value="Ribosomal_uS3_B"/>
    <property type="match status" value="1"/>
</dbReference>
<dbReference type="InterPro" id="IPR004087">
    <property type="entry name" value="KH_dom"/>
</dbReference>
<dbReference type="InterPro" id="IPR015946">
    <property type="entry name" value="KH_dom-like_a/b"/>
</dbReference>
<dbReference type="InterPro" id="IPR004044">
    <property type="entry name" value="KH_dom_type_2"/>
</dbReference>
<dbReference type="InterPro" id="IPR009019">
    <property type="entry name" value="KH_sf_prok-type"/>
</dbReference>
<dbReference type="InterPro" id="IPR036419">
    <property type="entry name" value="Ribosomal_S3_C_sf"/>
</dbReference>
<dbReference type="InterPro" id="IPR005704">
    <property type="entry name" value="Ribosomal_uS3_bac-typ"/>
</dbReference>
<dbReference type="InterPro" id="IPR001351">
    <property type="entry name" value="Ribosomal_uS3_C"/>
</dbReference>
<dbReference type="InterPro" id="IPR018280">
    <property type="entry name" value="Ribosomal_uS3_CS"/>
</dbReference>
<dbReference type="NCBIfam" id="TIGR01009">
    <property type="entry name" value="rpsC_bact"/>
    <property type="match status" value="1"/>
</dbReference>
<dbReference type="PANTHER" id="PTHR11760">
    <property type="entry name" value="30S/40S RIBOSOMAL PROTEIN S3"/>
    <property type="match status" value="1"/>
</dbReference>
<dbReference type="PANTHER" id="PTHR11760:SF19">
    <property type="entry name" value="SMALL RIBOSOMAL SUBUNIT PROTEIN US3C"/>
    <property type="match status" value="1"/>
</dbReference>
<dbReference type="Pfam" id="PF07650">
    <property type="entry name" value="KH_2"/>
    <property type="match status" value="1"/>
</dbReference>
<dbReference type="Pfam" id="PF00189">
    <property type="entry name" value="Ribosomal_S3_C"/>
    <property type="match status" value="1"/>
</dbReference>
<dbReference type="SMART" id="SM00322">
    <property type="entry name" value="KH"/>
    <property type="match status" value="1"/>
</dbReference>
<dbReference type="SUPFAM" id="SSF54814">
    <property type="entry name" value="Prokaryotic type KH domain (KH-domain type II)"/>
    <property type="match status" value="1"/>
</dbReference>
<dbReference type="SUPFAM" id="SSF54821">
    <property type="entry name" value="Ribosomal protein S3 C-terminal domain"/>
    <property type="match status" value="1"/>
</dbReference>
<dbReference type="PROSITE" id="PS50823">
    <property type="entry name" value="KH_TYPE_2"/>
    <property type="match status" value="1"/>
</dbReference>
<dbReference type="PROSITE" id="PS00548">
    <property type="entry name" value="RIBOSOMAL_S3"/>
    <property type="match status" value="1"/>
</dbReference>
<feature type="chain" id="PRO_0000293865" description="Small ribosomal subunit protein uS3">
    <location>
        <begin position="1"/>
        <end position="238"/>
    </location>
</feature>
<feature type="domain" description="KH type-2" evidence="1">
    <location>
        <begin position="39"/>
        <end position="107"/>
    </location>
</feature>
<feature type="region of interest" description="Disordered" evidence="2">
    <location>
        <begin position="212"/>
        <end position="238"/>
    </location>
</feature>
<feature type="compositionally biased region" description="Basic and acidic residues" evidence="2">
    <location>
        <begin position="212"/>
        <end position="222"/>
    </location>
</feature>
<proteinExistence type="inferred from homology"/>